<accession>Q9NVL8</accession>
<accession>Q17R99</accession>
<accession>Q53G04</accession>
<gene>
    <name evidence="10" type="primary">CCDC198</name>
    <name type="synonym">C14orf105</name>
    <name evidence="8" type="synonym">FAME</name>
</gene>
<reference key="1">
    <citation type="journal article" date="2004" name="Nat. Genet.">
        <title>Complete sequencing and characterization of 21,243 full-length human cDNAs.</title>
        <authorList>
            <person name="Ota T."/>
            <person name="Suzuki Y."/>
            <person name="Nishikawa T."/>
            <person name="Otsuki T."/>
            <person name="Sugiyama T."/>
            <person name="Irie R."/>
            <person name="Wakamatsu A."/>
            <person name="Hayashi K."/>
            <person name="Sato H."/>
            <person name="Nagai K."/>
            <person name="Kimura K."/>
            <person name="Makita H."/>
            <person name="Sekine M."/>
            <person name="Obayashi M."/>
            <person name="Nishi T."/>
            <person name="Shibahara T."/>
            <person name="Tanaka T."/>
            <person name="Ishii S."/>
            <person name="Yamamoto J."/>
            <person name="Saito K."/>
            <person name="Kawai Y."/>
            <person name="Isono Y."/>
            <person name="Nakamura Y."/>
            <person name="Nagahari K."/>
            <person name="Murakami K."/>
            <person name="Yasuda T."/>
            <person name="Iwayanagi T."/>
            <person name="Wagatsuma M."/>
            <person name="Shiratori A."/>
            <person name="Sudo H."/>
            <person name="Hosoiri T."/>
            <person name="Kaku Y."/>
            <person name="Kodaira H."/>
            <person name="Kondo H."/>
            <person name="Sugawara M."/>
            <person name="Takahashi M."/>
            <person name="Kanda K."/>
            <person name="Yokoi T."/>
            <person name="Furuya T."/>
            <person name="Kikkawa E."/>
            <person name="Omura Y."/>
            <person name="Abe K."/>
            <person name="Kamihara K."/>
            <person name="Katsuta N."/>
            <person name="Sato K."/>
            <person name="Tanikawa M."/>
            <person name="Yamazaki M."/>
            <person name="Ninomiya K."/>
            <person name="Ishibashi T."/>
            <person name="Yamashita H."/>
            <person name="Murakawa K."/>
            <person name="Fujimori K."/>
            <person name="Tanai H."/>
            <person name="Kimata M."/>
            <person name="Watanabe M."/>
            <person name="Hiraoka S."/>
            <person name="Chiba Y."/>
            <person name="Ishida S."/>
            <person name="Ono Y."/>
            <person name="Takiguchi S."/>
            <person name="Watanabe S."/>
            <person name="Yosida M."/>
            <person name="Hotuta T."/>
            <person name="Kusano J."/>
            <person name="Kanehori K."/>
            <person name="Takahashi-Fujii A."/>
            <person name="Hara H."/>
            <person name="Tanase T.-O."/>
            <person name="Nomura Y."/>
            <person name="Togiya S."/>
            <person name="Komai F."/>
            <person name="Hara R."/>
            <person name="Takeuchi K."/>
            <person name="Arita M."/>
            <person name="Imose N."/>
            <person name="Musashino K."/>
            <person name="Yuuki H."/>
            <person name="Oshima A."/>
            <person name="Sasaki N."/>
            <person name="Aotsuka S."/>
            <person name="Yoshikawa Y."/>
            <person name="Matsunawa H."/>
            <person name="Ichihara T."/>
            <person name="Shiohata N."/>
            <person name="Sano S."/>
            <person name="Moriya S."/>
            <person name="Momiyama H."/>
            <person name="Satoh N."/>
            <person name="Takami S."/>
            <person name="Terashima Y."/>
            <person name="Suzuki O."/>
            <person name="Nakagawa S."/>
            <person name="Senoh A."/>
            <person name="Mizoguchi H."/>
            <person name="Goto Y."/>
            <person name="Shimizu F."/>
            <person name="Wakebe H."/>
            <person name="Hishigaki H."/>
            <person name="Watanabe T."/>
            <person name="Sugiyama A."/>
            <person name="Takemoto M."/>
            <person name="Kawakami B."/>
            <person name="Yamazaki M."/>
            <person name="Watanabe K."/>
            <person name="Kumagai A."/>
            <person name="Itakura S."/>
            <person name="Fukuzumi Y."/>
            <person name="Fujimori Y."/>
            <person name="Komiyama M."/>
            <person name="Tashiro H."/>
            <person name="Tanigami A."/>
            <person name="Fujiwara T."/>
            <person name="Ono T."/>
            <person name="Yamada K."/>
            <person name="Fujii Y."/>
            <person name="Ozaki K."/>
            <person name="Hirao M."/>
            <person name="Ohmori Y."/>
            <person name="Kawabata A."/>
            <person name="Hikiji T."/>
            <person name="Kobatake N."/>
            <person name="Inagaki H."/>
            <person name="Ikema Y."/>
            <person name="Okamoto S."/>
            <person name="Okitani R."/>
            <person name="Kawakami T."/>
            <person name="Noguchi S."/>
            <person name="Itoh T."/>
            <person name="Shigeta K."/>
            <person name="Senba T."/>
            <person name="Matsumura K."/>
            <person name="Nakajima Y."/>
            <person name="Mizuno T."/>
            <person name="Morinaga M."/>
            <person name="Sasaki M."/>
            <person name="Togashi T."/>
            <person name="Oyama M."/>
            <person name="Hata H."/>
            <person name="Watanabe M."/>
            <person name="Komatsu T."/>
            <person name="Mizushima-Sugano J."/>
            <person name="Satoh T."/>
            <person name="Shirai Y."/>
            <person name="Takahashi Y."/>
            <person name="Nakagawa K."/>
            <person name="Okumura K."/>
            <person name="Nagase T."/>
            <person name="Nomura N."/>
            <person name="Kikuchi H."/>
            <person name="Masuho Y."/>
            <person name="Yamashita R."/>
            <person name="Nakai K."/>
            <person name="Yada T."/>
            <person name="Nakamura Y."/>
            <person name="Ohara O."/>
            <person name="Isogai T."/>
            <person name="Sugano S."/>
        </authorList>
    </citation>
    <scope>NUCLEOTIDE SEQUENCE [LARGE SCALE MRNA]</scope>
    <scope>VARIANT CYS-235</scope>
    <source>
        <tissue>Teratocarcinoma</tissue>
    </source>
</reference>
<reference key="2">
    <citation type="submission" date="2005-04" db="EMBL/GenBank/DDBJ databases">
        <authorList>
            <person name="Suzuki Y."/>
            <person name="Sugano S."/>
            <person name="Totoki Y."/>
            <person name="Toyoda A."/>
            <person name="Takeda T."/>
            <person name="Sakaki Y."/>
            <person name="Tanaka A."/>
            <person name="Yokoyama S."/>
        </authorList>
    </citation>
    <scope>NUCLEOTIDE SEQUENCE [LARGE SCALE MRNA]</scope>
    <scope>VARIANT CYS-235</scope>
    <source>
        <tissue>Kidney</tissue>
    </source>
</reference>
<reference key="3">
    <citation type="journal article" date="2003" name="Nature">
        <title>The DNA sequence and analysis of human chromosome 14.</title>
        <authorList>
            <person name="Heilig R."/>
            <person name="Eckenberg R."/>
            <person name="Petit J.-L."/>
            <person name="Fonknechten N."/>
            <person name="Da Silva C."/>
            <person name="Cattolico L."/>
            <person name="Levy M."/>
            <person name="Barbe V."/>
            <person name="De Berardinis V."/>
            <person name="Ureta-Vidal A."/>
            <person name="Pelletier E."/>
            <person name="Vico V."/>
            <person name="Anthouard V."/>
            <person name="Rowen L."/>
            <person name="Madan A."/>
            <person name="Qin S."/>
            <person name="Sun H."/>
            <person name="Du H."/>
            <person name="Pepin K."/>
            <person name="Artiguenave F."/>
            <person name="Robert C."/>
            <person name="Cruaud C."/>
            <person name="Bruels T."/>
            <person name="Jaillon O."/>
            <person name="Friedlander L."/>
            <person name="Samson G."/>
            <person name="Brottier P."/>
            <person name="Cure S."/>
            <person name="Segurens B."/>
            <person name="Aniere F."/>
            <person name="Samain S."/>
            <person name="Crespeau H."/>
            <person name="Abbasi N."/>
            <person name="Aiach N."/>
            <person name="Boscus D."/>
            <person name="Dickhoff R."/>
            <person name="Dors M."/>
            <person name="Dubois I."/>
            <person name="Friedman C."/>
            <person name="Gouyvenoux M."/>
            <person name="James R."/>
            <person name="Madan A."/>
            <person name="Mairey-Estrada B."/>
            <person name="Mangenot S."/>
            <person name="Martins N."/>
            <person name="Menard M."/>
            <person name="Oztas S."/>
            <person name="Ratcliffe A."/>
            <person name="Shaffer T."/>
            <person name="Trask B."/>
            <person name="Vacherie B."/>
            <person name="Bellemere C."/>
            <person name="Belser C."/>
            <person name="Besnard-Gonnet M."/>
            <person name="Bartol-Mavel D."/>
            <person name="Boutard M."/>
            <person name="Briez-Silla S."/>
            <person name="Combette S."/>
            <person name="Dufosse-Laurent V."/>
            <person name="Ferron C."/>
            <person name="Lechaplais C."/>
            <person name="Louesse C."/>
            <person name="Muselet D."/>
            <person name="Magdelenat G."/>
            <person name="Pateau E."/>
            <person name="Petit E."/>
            <person name="Sirvain-Trukniewicz P."/>
            <person name="Trybou A."/>
            <person name="Vega-Czarny N."/>
            <person name="Bataille E."/>
            <person name="Bluet E."/>
            <person name="Bordelais I."/>
            <person name="Dubois M."/>
            <person name="Dumont C."/>
            <person name="Guerin T."/>
            <person name="Haffray S."/>
            <person name="Hammadi R."/>
            <person name="Muanga J."/>
            <person name="Pellouin V."/>
            <person name="Robert D."/>
            <person name="Wunderle E."/>
            <person name="Gauguet G."/>
            <person name="Roy A."/>
            <person name="Sainte-Marthe L."/>
            <person name="Verdier J."/>
            <person name="Verdier-Discala C."/>
            <person name="Hillier L.W."/>
            <person name="Fulton L."/>
            <person name="McPherson J."/>
            <person name="Matsuda F."/>
            <person name="Wilson R."/>
            <person name="Scarpelli C."/>
            <person name="Gyapay G."/>
            <person name="Wincker P."/>
            <person name="Saurin W."/>
            <person name="Quetier F."/>
            <person name="Waterston R."/>
            <person name="Hood L."/>
            <person name="Weissenbach J."/>
        </authorList>
    </citation>
    <scope>NUCLEOTIDE SEQUENCE [LARGE SCALE GENOMIC DNA]</scope>
</reference>
<reference key="4">
    <citation type="submission" date="2005-07" db="EMBL/GenBank/DDBJ databases">
        <authorList>
            <person name="Mural R.J."/>
            <person name="Istrail S."/>
            <person name="Sutton G.G."/>
            <person name="Florea L."/>
            <person name="Halpern A.L."/>
            <person name="Mobarry C.M."/>
            <person name="Lippert R."/>
            <person name="Walenz B."/>
            <person name="Shatkay H."/>
            <person name="Dew I."/>
            <person name="Miller J.R."/>
            <person name="Flanigan M.J."/>
            <person name="Edwards N.J."/>
            <person name="Bolanos R."/>
            <person name="Fasulo D."/>
            <person name="Halldorsson B.V."/>
            <person name="Hannenhalli S."/>
            <person name="Turner R."/>
            <person name="Yooseph S."/>
            <person name="Lu F."/>
            <person name="Nusskern D.R."/>
            <person name="Shue B.C."/>
            <person name="Zheng X.H."/>
            <person name="Zhong F."/>
            <person name="Delcher A.L."/>
            <person name="Huson D.H."/>
            <person name="Kravitz S.A."/>
            <person name="Mouchard L."/>
            <person name="Reinert K."/>
            <person name="Remington K.A."/>
            <person name="Clark A.G."/>
            <person name="Waterman M.S."/>
            <person name="Eichler E.E."/>
            <person name="Adams M.D."/>
            <person name="Hunkapiller M.W."/>
            <person name="Myers E.W."/>
            <person name="Venter J.C."/>
        </authorList>
    </citation>
    <scope>NUCLEOTIDE SEQUENCE [LARGE SCALE GENOMIC DNA]</scope>
    <scope>VARIANT CYS-235</scope>
</reference>
<reference key="5">
    <citation type="journal article" date="2004" name="Genome Res.">
        <title>The status, quality, and expansion of the NIH full-length cDNA project: the Mammalian Gene Collection (MGC).</title>
        <authorList>
            <consortium name="The MGC Project Team"/>
        </authorList>
    </citation>
    <scope>NUCLEOTIDE SEQUENCE [LARGE SCALE MRNA]</scope>
    <scope>VARIANT CYS-235</scope>
    <source>
        <tissue>Liver</tissue>
    </source>
</reference>
<reference key="6">
    <citation type="journal article" date="2023" name="Nat. Commun.">
        <title>A previously uncharacterized Factor Associated with Metabolism and Energy (FAME/C14orf105/CCDC198/1700011H14Rik) is related to evolutionary adaptation, energy balance, and kidney physiology.</title>
        <authorList>
            <person name="Petersen J."/>
            <person name="Englmaier L."/>
            <person name="Artemov A.V."/>
            <person name="Poverennaya I."/>
            <person name="Mahmoud R."/>
            <person name="Bouderlique T."/>
            <person name="Tesarova M."/>
            <person name="Deviatiiarov R."/>
            <person name="Szilvasy-Szabo A."/>
            <person name="Akkuratov E.E."/>
            <person name="Pajuelo Reguera D."/>
            <person name="Zeberg H."/>
            <person name="Kaucka M."/>
            <person name="Kastriti M.E."/>
            <person name="Krivanek J."/>
            <person name="Radaszkiewicz T."/>
            <person name="Goemoeryova K."/>
            <person name="Knauth S."/>
            <person name="Potesil D."/>
            <person name="Zdrahal Z."/>
            <person name="Ganji R.S."/>
            <person name="Grabowski A."/>
            <person name="Buhl M.E."/>
            <person name="Zikmund T."/>
            <person name="Kavkova M."/>
            <person name="Axelson H."/>
            <person name="Lindgren D."/>
            <person name="Kramann R."/>
            <person name="Kuppe C."/>
            <person name="Erdelyi F."/>
            <person name="Mate Z."/>
            <person name="Szabo G."/>
            <person name="Koehne T."/>
            <person name="Harkany T."/>
            <person name="Fried K."/>
            <person name="Kaiser J."/>
            <person name="Boor P."/>
            <person name="Fekete C."/>
            <person name="Rozman J."/>
            <person name="Kasparek P."/>
            <person name="Prochazka J."/>
            <person name="Sedlacek R."/>
            <person name="Bryja V."/>
            <person name="Gusev O."/>
            <person name="Adameyko I."/>
        </authorList>
    </citation>
    <scope>SUBCELLULAR LOCATION</scope>
</reference>
<name>FAME_HUMAN</name>
<proteinExistence type="evidence at protein level"/>
<protein>
    <recommendedName>
        <fullName evidence="8">Factor associated with metabolism and energy</fullName>
    </recommendedName>
    <alternativeName>
        <fullName evidence="9">Protein CCDC198</fullName>
    </alternativeName>
</protein>
<feature type="initiator methionine" description="Removed" evidence="1">
    <location>
        <position position="1"/>
    </location>
</feature>
<feature type="chain" id="PRO_0000089913" description="Factor associated with metabolism and energy">
    <location>
        <begin position="2"/>
        <end position="296"/>
    </location>
</feature>
<feature type="region of interest" description="Disordered" evidence="2">
    <location>
        <begin position="173"/>
        <end position="204"/>
    </location>
</feature>
<feature type="region of interest" description="Disordered" evidence="2">
    <location>
        <begin position="256"/>
        <end position="281"/>
    </location>
</feature>
<feature type="compositionally biased region" description="Basic and acidic residues" evidence="2">
    <location>
        <begin position="173"/>
        <end position="187"/>
    </location>
</feature>
<feature type="compositionally biased region" description="Basic and acidic residues" evidence="2">
    <location>
        <begin position="267"/>
        <end position="281"/>
    </location>
</feature>
<feature type="lipid moiety-binding region" description="N-myristoyl glycine" evidence="1">
    <location>
        <position position="2"/>
    </location>
</feature>
<feature type="sequence variant" id="VAR_024310" description="In dbSNP:rs1152530." evidence="3 4 6 7">
    <original>Y</original>
    <variation>C</variation>
    <location>
        <position position="235"/>
    </location>
</feature>
<feature type="sequence conflict" description="In Ref. 5; AAI17406/AAI43567 and 4; EAW80707." evidence="9" ref="5 4">
    <location>
        <position position="132"/>
    </location>
</feature>
<feature type="sequence conflict" description="In Ref. 1; BAA91732." evidence="9" ref="1">
    <original>N</original>
    <variation>D</variation>
    <location>
        <position position="223"/>
    </location>
</feature>
<keyword id="KW-1003">Cell membrane</keyword>
<keyword id="KW-0968">Cytoplasmic vesicle</keyword>
<keyword id="KW-0449">Lipoprotein</keyword>
<keyword id="KW-0472">Membrane</keyword>
<keyword id="KW-0519">Myristate</keyword>
<keyword id="KW-1267">Proteomics identification</keyword>
<keyword id="KW-1185">Reference proteome</keyword>
<dbReference type="EMBL" id="AK001512">
    <property type="protein sequence ID" value="BAA91732.1"/>
    <property type="molecule type" value="mRNA"/>
</dbReference>
<dbReference type="EMBL" id="AK223127">
    <property type="protein sequence ID" value="BAD96847.1"/>
    <property type="molecule type" value="mRNA"/>
</dbReference>
<dbReference type="EMBL" id="AL161804">
    <property type="status" value="NOT_ANNOTATED_CDS"/>
    <property type="molecule type" value="Genomic_DNA"/>
</dbReference>
<dbReference type="EMBL" id="AL355834">
    <property type="status" value="NOT_ANNOTATED_CDS"/>
    <property type="molecule type" value="Genomic_DNA"/>
</dbReference>
<dbReference type="EMBL" id="CH471061">
    <property type="protein sequence ID" value="EAW80707.1"/>
    <property type="molecule type" value="Genomic_DNA"/>
</dbReference>
<dbReference type="EMBL" id="BC117405">
    <property type="protein sequence ID" value="AAI17406.1"/>
    <property type="molecule type" value="mRNA"/>
</dbReference>
<dbReference type="EMBL" id="BC143566">
    <property type="protein sequence ID" value="AAI43567.1"/>
    <property type="molecule type" value="mRNA"/>
</dbReference>
<dbReference type="CCDS" id="CCDS9730.1"/>
<dbReference type="RefSeq" id="NP_001269985.1">
    <property type="nucleotide sequence ID" value="NM_001283056.1"/>
</dbReference>
<dbReference type="RefSeq" id="NP_001269986.1">
    <property type="nucleotide sequence ID" value="NM_001283057.1"/>
</dbReference>
<dbReference type="RefSeq" id="NP_001269987.1">
    <property type="nucleotide sequence ID" value="NM_001283058.1"/>
</dbReference>
<dbReference type="RefSeq" id="NP_001269988.1">
    <property type="nucleotide sequence ID" value="NM_001283059.1"/>
</dbReference>
<dbReference type="RefSeq" id="NP_060638.2">
    <property type="nucleotide sequence ID" value="NM_018168.4"/>
</dbReference>
<dbReference type="BioGRID" id="120492">
    <property type="interactions" value="34"/>
</dbReference>
<dbReference type="FunCoup" id="Q9NVL8">
    <property type="interactions" value="10"/>
</dbReference>
<dbReference type="IntAct" id="Q9NVL8">
    <property type="interactions" value="19"/>
</dbReference>
<dbReference type="MINT" id="Q9NVL8"/>
<dbReference type="STRING" id="9606.ENSP00000392368"/>
<dbReference type="iPTMnet" id="Q9NVL8"/>
<dbReference type="PhosphoSitePlus" id="Q9NVL8"/>
<dbReference type="BioMuta" id="CCDC198"/>
<dbReference type="DMDM" id="160332322"/>
<dbReference type="jPOST" id="Q9NVL8"/>
<dbReference type="MassIVE" id="Q9NVL8"/>
<dbReference type="PeptideAtlas" id="Q9NVL8"/>
<dbReference type="ProteomicsDB" id="82824"/>
<dbReference type="Antibodypedia" id="24135">
    <property type="antibodies" value="27 antibodies from 11 providers"/>
</dbReference>
<dbReference type="DNASU" id="55195"/>
<dbReference type="Ensembl" id="ENST00000216445.8">
    <property type="protein sequence ID" value="ENSP00000216445.3"/>
    <property type="gene ID" value="ENSG00000100557.10"/>
</dbReference>
<dbReference type="GeneID" id="55195"/>
<dbReference type="KEGG" id="hsa:55195"/>
<dbReference type="MANE-Select" id="ENST00000216445.8">
    <property type="protein sequence ID" value="ENSP00000216445.3"/>
    <property type="RefSeq nucleotide sequence ID" value="NM_018168.4"/>
    <property type="RefSeq protein sequence ID" value="NP_060638.2"/>
</dbReference>
<dbReference type="UCSC" id="uc001xcy.4">
    <property type="organism name" value="human"/>
</dbReference>
<dbReference type="AGR" id="HGNC:20189"/>
<dbReference type="CTD" id="55195"/>
<dbReference type="GeneCards" id="CCDC198"/>
<dbReference type="HGNC" id="HGNC:20189">
    <property type="gene designation" value="CCDC198"/>
</dbReference>
<dbReference type="HPA" id="ENSG00000100557">
    <property type="expression patterns" value="Tissue enhanced (fallopian tube, kidney, liver, pancreas)"/>
</dbReference>
<dbReference type="neXtProt" id="NX_Q9NVL8"/>
<dbReference type="OpenTargets" id="ENSG00000100557"/>
<dbReference type="PharmGKB" id="PA134868494"/>
<dbReference type="VEuPathDB" id="HostDB:ENSG00000100557"/>
<dbReference type="GeneTree" id="ENSGT00390000001071"/>
<dbReference type="HOGENOM" id="CLU_081875_0_0_1"/>
<dbReference type="InParanoid" id="Q9NVL8"/>
<dbReference type="OMA" id="QRDHKAK"/>
<dbReference type="OrthoDB" id="6344011at2759"/>
<dbReference type="PAN-GO" id="Q9NVL8">
    <property type="GO annotations" value="0 GO annotations based on evolutionary models"/>
</dbReference>
<dbReference type="PhylomeDB" id="Q9NVL8"/>
<dbReference type="TreeFam" id="TF336148"/>
<dbReference type="PathwayCommons" id="Q9NVL8"/>
<dbReference type="SignaLink" id="Q9NVL8"/>
<dbReference type="BioGRID-ORCS" id="55195">
    <property type="hits" value="13 hits in 1110 CRISPR screens"/>
</dbReference>
<dbReference type="GenomeRNAi" id="55195"/>
<dbReference type="Pharos" id="Q9NVL8">
    <property type="development level" value="Tdark"/>
</dbReference>
<dbReference type="PRO" id="PR:Q9NVL8"/>
<dbReference type="Proteomes" id="UP000005640">
    <property type="component" value="Chromosome 14"/>
</dbReference>
<dbReference type="RNAct" id="Q9NVL8">
    <property type="molecule type" value="protein"/>
</dbReference>
<dbReference type="Bgee" id="ENSG00000100557">
    <property type="expression patterns" value="Expressed in right uterine tube and 106 other cell types or tissues"/>
</dbReference>
<dbReference type="ExpressionAtlas" id="Q9NVL8">
    <property type="expression patterns" value="baseline and differential"/>
</dbReference>
<dbReference type="GO" id="GO:0031410">
    <property type="term" value="C:cytoplasmic vesicle"/>
    <property type="evidence" value="ECO:0000250"/>
    <property type="project" value="UniProtKB"/>
</dbReference>
<dbReference type="GO" id="GO:0005886">
    <property type="term" value="C:plasma membrane"/>
    <property type="evidence" value="ECO:0000250"/>
    <property type="project" value="UniProtKB"/>
</dbReference>
<dbReference type="GO" id="GO:0097009">
    <property type="term" value="P:energy homeostasis"/>
    <property type="evidence" value="ECO:0000250"/>
    <property type="project" value="UniProtKB"/>
</dbReference>
<dbReference type="InterPro" id="IPR029235">
    <property type="entry name" value="FAME"/>
</dbReference>
<dbReference type="PANTHER" id="PTHR16065">
    <property type="entry name" value="COILED-COIL DOMAIN CONTAINING 198"/>
    <property type="match status" value="1"/>
</dbReference>
<dbReference type="PANTHER" id="PTHR16065:SF2">
    <property type="entry name" value="COILED-COIL DOMAIN CONTAINING 198"/>
    <property type="match status" value="1"/>
</dbReference>
<dbReference type="Pfam" id="PF15398">
    <property type="entry name" value="DUF4619"/>
    <property type="match status" value="1"/>
</dbReference>
<organism>
    <name type="scientific">Homo sapiens</name>
    <name type="common">Human</name>
    <dbReference type="NCBI Taxonomy" id="9606"/>
    <lineage>
        <taxon>Eukaryota</taxon>
        <taxon>Metazoa</taxon>
        <taxon>Chordata</taxon>
        <taxon>Craniata</taxon>
        <taxon>Vertebrata</taxon>
        <taxon>Euteleostomi</taxon>
        <taxon>Mammalia</taxon>
        <taxon>Eutheria</taxon>
        <taxon>Euarchontoglires</taxon>
        <taxon>Primates</taxon>
        <taxon>Haplorrhini</taxon>
        <taxon>Catarrhini</taxon>
        <taxon>Hominidae</taxon>
        <taxon>Homo</taxon>
    </lineage>
</organism>
<evidence type="ECO:0000250" key="1">
    <source>
        <dbReference type="UniProtKB" id="Q9CPZ1"/>
    </source>
</evidence>
<evidence type="ECO:0000256" key="2">
    <source>
        <dbReference type="SAM" id="MobiDB-lite"/>
    </source>
</evidence>
<evidence type="ECO:0000269" key="3">
    <source>
    </source>
</evidence>
<evidence type="ECO:0000269" key="4">
    <source>
    </source>
</evidence>
<evidence type="ECO:0000269" key="5">
    <source>
    </source>
</evidence>
<evidence type="ECO:0000269" key="6">
    <source ref="2"/>
</evidence>
<evidence type="ECO:0000269" key="7">
    <source ref="4"/>
</evidence>
<evidence type="ECO:0000303" key="8">
    <source>
    </source>
</evidence>
<evidence type="ECO:0000305" key="9"/>
<evidence type="ECO:0000312" key="10">
    <source>
        <dbReference type="HGNC" id="HGNC:20189"/>
    </source>
</evidence>
<sequence>MGLSHSKTHLRVIKVAPLQNKEVETPSAGRVDFAFNQNLEEKTSYSLARLQDQNKALEGQLPPLQENWYGRYSTASRDMYFDIPLEHRETSIIKRHPPQRLQKLEPIDLPRVITSGRLLSQREARTMHKAKQVLEKKMQTPMYTSENRQYLHKMQVLEMIRKRQEAQMELKKSLHGEARINKQSPRDHKAKKTLQSTPRNDDHDLLTMLPDEILNRGPGNSKNTEFLKHQAVNNYCPWKIGKMETWLHEQEAQGQLLWDSSSSDSDEQGKDEKKPRALVRTRTERIPLFDEFFDQE</sequence>
<comment type="function">
    <text evidence="1">May be involved in tuning the metabolism, energy expenditure, and excretion processes.</text>
</comment>
<comment type="interaction">
    <interactant intactId="EBI-10238351">
        <id>Q9NVL8</id>
    </interactant>
    <interactant intactId="EBI-741724">
        <id>Q8NA61</id>
        <label>CBY2</label>
    </interactant>
    <organismsDiffer>false</organismsDiffer>
    <experiments>3</experiments>
</comment>
<comment type="interaction">
    <interactant intactId="EBI-10238351">
        <id>Q9NVL8</id>
    </interactant>
    <interactant intactId="EBI-10175124">
        <id>Q8IZU0</id>
        <label>FAM9B</label>
    </interactant>
    <organismsDiffer>false</organismsDiffer>
    <experiments>3</experiments>
</comment>
<comment type="interaction">
    <interactant intactId="EBI-10238351">
        <id>Q9NVL8</id>
    </interactant>
    <interactant intactId="EBI-741101">
        <id>Q13643</id>
        <label>FHL3</label>
    </interactant>
    <organismsDiffer>false</organismsDiffer>
    <experiments>3</experiments>
</comment>
<comment type="interaction">
    <interactant intactId="EBI-10238351">
        <id>Q9NVL8</id>
    </interactant>
    <interactant intactId="EBI-618309">
        <id>Q08379</id>
        <label>GOLGA2</label>
    </interactant>
    <organismsDiffer>false</organismsDiffer>
    <experiments>3</experiments>
</comment>
<comment type="interaction">
    <interactant intactId="EBI-10238351">
        <id>Q9NVL8</id>
    </interactant>
    <interactant intactId="EBI-10171697">
        <id>Q6A162</id>
        <label>KRT40</label>
    </interactant>
    <organismsDiffer>false</organismsDiffer>
    <experiments>3</experiments>
</comment>
<comment type="interaction">
    <interactant intactId="EBI-10238351">
        <id>Q9NVL8</id>
    </interactant>
    <interactant intactId="EBI-741037">
        <id>Q9BRK4</id>
        <label>LZTS2</label>
    </interactant>
    <organismsDiffer>false</organismsDiffer>
    <experiments>3</experiments>
</comment>
<comment type="interaction">
    <interactant intactId="EBI-10238351">
        <id>Q9NVL8</id>
    </interactant>
    <interactant intactId="EBI-724076">
        <id>Q99750</id>
        <label>MDFI</label>
    </interactant>
    <organismsDiffer>false</organismsDiffer>
    <experiments>3</experiments>
</comment>
<comment type="interaction">
    <interactant intactId="EBI-10238351">
        <id>Q9NVL8</id>
    </interactant>
    <interactant intactId="EBI-742948">
        <id>Q5JR59</id>
        <label>MTUS2</label>
    </interactant>
    <organismsDiffer>false</organismsDiffer>
    <experiments>3</experiments>
</comment>
<comment type="interaction">
    <interactant intactId="EBI-10238351">
        <id>Q9NVL8</id>
    </interactant>
    <interactant intactId="EBI-1105124">
        <id>Q5VU43</id>
        <label>PDE4DIP</label>
    </interactant>
    <organismsDiffer>false</organismsDiffer>
    <experiments>3</experiments>
</comment>
<comment type="interaction">
    <interactant intactId="EBI-10238351">
        <id>Q9NVL8</id>
    </interactant>
    <interactant intactId="EBI-302345">
        <id>Q8ND90</id>
        <label>PNMA1</label>
    </interactant>
    <organismsDiffer>false</organismsDiffer>
    <experiments>3</experiments>
</comment>
<comment type="interaction">
    <interactant intactId="EBI-10238351">
        <id>Q9NVL8</id>
    </interactant>
    <interactant intactId="EBI-747107">
        <id>Q8IUQ4</id>
        <label>SIAH1</label>
    </interactant>
    <organismsDiffer>false</organismsDiffer>
    <experiments>3</experiments>
</comment>
<comment type="interaction">
    <interactant intactId="EBI-10238351">
        <id>Q9NVL8</id>
    </interactant>
    <interactant intactId="EBI-2212028">
        <id>Q9Y2D8</id>
        <label>SSX2IP</label>
    </interactant>
    <organismsDiffer>false</organismsDiffer>
    <experiments>3</experiments>
</comment>
<comment type="interaction">
    <interactant intactId="EBI-10238351">
        <id>Q9NVL8</id>
    </interactant>
    <interactant intactId="EBI-742397">
        <id>Q8IYF3</id>
        <label>TEX11</label>
    </interactant>
    <organismsDiffer>false</organismsDiffer>
    <experiments>3</experiments>
</comment>
<comment type="interaction">
    <interactant intactId="EBI-10238351">
        <id>Q9NVL8</id>
    </interactant>
    <interactant intactId="EBI-359224">
        <id>Q13077</id>
        <label>TRAF1</label>
    </interactant>
    <organismsDiffer>false</organismsDiffer>
    <experiments>3</experiments>
</comment>
<comment type="interaction">
    <interactant intactId="EBI-10238351">
        <id>Q9NVL8</id>
    </interactant>
    <interactant intactId="EBI-355744">
        <id>Q12933</id>
        <label>TRAF2</label>
    </interactant>
    <organismsDiffer>false</organismsDiffer>
    <experiments>3</experiments>
</comment>
<comment type="interaction">
    <interactant intactId="EBI-10238351">
        <id>Q9NVL8</id>
    </interactant>
    <interactant intactId="EBI-719493">
        <id>P14373</id>
        <label>TRIM27</label>
    </interactant>
    <organismsDiffer>false</organismsDiffer>
    <experiments>3</experiments>
</comment>
<comment type="subcellular location">
    <subcellularLocation>
        <location evidence="5">Cell membrane</location>
        <topology evidence="1">Peripheral membrane protein</topology>
    </subcellularLocation>
    <subcellularLocation>
        <location evidence="1">Cytoplasmic vesicle</location>
    </subcellularLocation>
    <text evidence="5">The localization of CCDC198 changes from membranous to vesicle-forming structures in the malignant tissue.</text>
</comment>